<gene>
    <name evidence="1" type="primary">rpsT</name>
    <name type="ordered locus">Neut_1673</name>
</gene>
<name>RS20_NITEC</name>
<reference key="1">
    <citation type="journal article" date="2007" name="Environ. Microbiol.">
        <title>Whole-genome analysis of the ammonia-oxidizing bacterium, Nitrosomonas eutropha C91: implications for niche adaptation.</title>
        <authorList>
            <person name="Stein L.Y."/>
            <person name="Arp D.J."/>
            <person name="Berube P.M."/>
            <person name="Chain P.S."/>
            <person name="Hauser L."/>
            <person name="Jetten M.S."/>
            <person name="Klotz M.G."/>
            <person name="Larimer F.W."/>
            <person name="Norton J.M."/>
            <person name="Op den Camp H.J.M."/>
            <person name="Shin M."/>
            <person name="Wei X."/>
        </authorList>
    </citation>
    <scope>NUCLEOTIDE SEQUENCE [LARGE SCALE GENOMIC DNA]</scope>
    <source>
        <strain>DSM 101675 / C91 / Nm57</strain>
    </source>
</reference>
<organism>
    <name type="scientific">Nitrosomonas eutropha (strain DSM 101675 / C91 / Nm57)</name>
    <dbReference type="NCBI Taxonomy" id="335283"/>
    <lineage>
        <taxon>Bacteria</taxon>
        <taxon>Pseudomonadati</taxon>
        <taxon>Pseudomonadota</taxon>
        <taxon>Betaproteobacteria</taxon>
        <taxon>Nitrosomonadales</taxon>
        <taxon>Nitrosomonadaceae</taxon>
        <taxon>Nitrosomonas</taxon>
    </lineage>
</organism>
<sequence>MANTAQAKKRVRQNIKQRERNSGLRSRLRTAIKSVRKAIVAGDKNLAETVFRKSVSIIDSIASKGIIHKNKASRHKSRLSGAVKAMG</sequence>
<protein>
    <recommendedName>
        <fullName evidence="1">Small ribosomal subunit protein bS20</fullName>
    </recommendedName>
    <alternativeName>
        <fullName evidence="3">30S ribosomal protein S20</fullName>
    </alternativeName>
</protein>
<accession>Q0AFG8</accession>
<evidence type="ECO:0000255" key="1">
    <source>
        <dbReference type="HAMAP-Rule" id="MF_00500"/>
    </source>
</evidence>
<evidence type="ECO:0000256" key="2">
    <source>
        <dbReference type="SAM" id="MobiDB-lite"/>
    </source>
</evidence>
<evidence type="ECO:0000305" key="3"/>
<comment type="function">
    <text evidence="1">Binds directly to 16S ribosomal RNA.</text>
</comment>
<comment type="similarity">
    <text evidence="1">Belongs to the bacterial ribosomal protein bS20 family.</text>
</comment>
<keyword id="KW-0687">Ribonucleoprotein</keyword>
<keyword id="KW-0689">Ribosomal protein</keyword>
<keyword id="KW-0694">RNA-binding</keyword>
<keyword id="KW-0699">rRNA-binding</keyword>
<feature type="chain" id="PRO_1000014614" description="Small ribosomal subunit protein bS20">
    <location>
        <begin position="1"/>
        <end position="87"/>
    </location>
</feature>
<feature type="region of interest" description="Disordered" evidence="2">
    <location>
        <begin position="1"/>
        <end position="26"/>
    </location>
</feature>
<proteinExistence type="inferred from homology"/>
<dbReference type="EMBL" id="CP000450">
    <property type="protein sequence ID" value="ABI59914.1"/>
    <property type="molecule type" value="Genomic_DNA"/>
</dbReference>
<dbReference type="RefSeq" id="WP_011634720.1">
    <property type="nucleotide sequence ID" value="NC_008344.1"/>
</dbReference>
<dbReference type="SMR" id="Q0AFG8"/>
<dbReference type="STRING" id="335283.Neut_1673"/>
<dbReference type="KEGG" id="net:Neut_1673"/>
<dbReference type="eggNOG" id="COG0268">
    <property type="taxonomic scope" value="Bacteria"/>
</dbReference>
<dbReference type="HOGENOM" id="CLU_160655_4_0_4"/>
<dbReference type="OrthoDB" id="9807974at2"/>
<dbReference type="Proteomes" id="UP000001966">
    <property type="component" value="Chromosome"/>
</dbReference>
<dbReference type="GO" id="GO:0005829">
    <property type="term" value="C:cytosol"/>
    <property type="evidence" value="ECO:0007669"/>
    <property type="project" value="TreeGrafter"/>
</dbReference>
<dbReference type="GO" id="GO:0015935">
    <property type="term" value="C:small ribosomal subunit"/>
    <property type="evidence" value="ECO:0007669"/>
    <property type="project" value="TreeGrafter"/>
</dbReference>
<dbReference type="GO" id="GO:0070181">
    <property type="term" value="F:small ribosomal subunit rRNA binding"/>
    <property type="evidence" value="ECO:0007669"/>
    <property type="project" value="TreeGrafter"/>
</dbReference>
<dbReference type="GO" id="GO:0003735">
    <property type="term" value="F:structural constituent of ribosome"/>
    <property type="evidence" value="ECO:0007669"/>
    <property type="project" value="InterPro"/>
</dbReference>
<dbReference type="GO" id="GO:0006412">
    <property type="term" value="P:translation"/>
    <property type="evidence" value="ECO:0007669"/>
    <property type="project" value="UniProtKB-UniRule"/>
</dbReference>
<dbReference type="FunFam" id="1.20.58.110:FF:000001">
    <property type="entry name" value="30S ribosomal protein S20"/>
    <property type="match status" value="1"/>
</dbReference>
<dbReference type="Gene3D" id="1.20.58.110">
    <property type="entry name" value="Ribosomal protein S20"/>
    <property type="match status" value="1"/>
</dbReference>
<dbReference type="HAMAP" id="MF_00500">
    <property type="entry name" value="Ribosomal_bS20"/>
    <property type="match status" value="1"/>
</dbReference>
<dbReference type="InterPro" id="IPR002583">
    <property type="entry name" value="Ribosomal_bS20"/>
</dbReference>
<dbReference type="InterPro" id="IPR036510">
    <property type="entry name" value="Ribosomal_bS20_sf"/>
</dbReference>
<dbReference type="NCBIfam" id="TIGR00029">
    <property type="entry name" value="S20"/>
    <property type="match status" value="1"/>
</dbReference>
<dbReference type="PANTHER" id="PTHR33398">
    <property type="entry name" value="30S RIBOSOMAL PROTEIN S20"/>
    <property type="match status" value="1"/>
</dbReference>
<dbReference type="PANTHER" id="PTHR33398:SF1">
    <property type="entry name" value="SMALL RIBOSOMAL SUBUNIT PROTEIN BS20C"/>
    <property type="match status" value="1"/>
</dbReference>
<dbReference type="Pfam" id="PF01649">
    <property type="entry name" value="Ribosomal_S20p"/>
    <property type="match status" value="1"/>
</dbReference>
<dbReference type="SUPFAM" id="SSF46992">
    <property type="entry name" value="Ribosomal protein S20"/>
    <property type="match status" value="1"/>
</dbReference>